<feature type="chain" id="PRO_0000140042" description="Ribonuclease P protein component 3">
    <location>
        <begin position="1"/>
        <end position="232"/>
    </location>
</feature>
<name>RNP3_METMP</name>
<proteinExistence type="evidence at protein level"/>
<evidence type="ECO:0000255" key="1">
    <source>
        <dbReference type="HAMAP-Rule" id="MF_00756"/>
    </source>
</evidence>
<evidence type="ECO:0000269" key="2">
    <source>
    </source>
</evidence>
<reference key="1">
    <citation type="journal article" date="2004" name="J. Bacteriol.">
        <title>Complete genome sequence of the genetically tractable hydrogenotrophic methanogen Methanococcus maripaludis.</title>
        <authorList>
            <person name="Hendrickson E.L."/>
            <person name="Kaul R."/>
            <person name="Zhou Y."/>
            <person name="Bovee D."/>
            <person name="Chapman P."/>
            <person name="Chung J."/>
            <person name="Conway de Macario E."/>
            <person name="Dodsworth J.A."/>
            <person name="Gillett W."/>
            <person name="Graham D.E."/>
            <person name="Hackett M."/>
            <person name="Haydock A.K."/>
            <person name="Kang A."/>
            <person name="Land M.L."/>
            <person name="Levy R."/>
            <person name="Lie T.J."/>
            <person name="Major T.A."/>
            <person name="Moore B.C."/>
            <person name="Porat I."/>
            <person name="Palmeiri A."/>
            <person name="Rouse G."/>
            <person name="Saenphimmachak C."/>
            <person name="Soell D."/>
            <person name="Van Dien S."/>
            <person name="Wang T."/>
            <person name="Whitman W.B."/>
            <person name="Xia Q."/>
            <person name="Zhang Y."/>
            <person name="Larimer F.W."/>
            <person name="Olson M.V."/>
            <person name="Leigh J.A."/>
        </authorList>
    </citation>
    <scope>NUCLEOTIDE SEQUENCE [LARGE SCALE GENOMIC DNA]</scope>
    <source>
        <strain>DSM 14266 / JCM 13030 / NBRC 101832 / S2 / LL</strain>
    </source>
</reference>
<reference key="2">
    <citation type="journal article" date="2010" name="Proc. Natl. Acad. Sci. U.S.A.">
        <title>Ribosomal protein L7Ae is a subunit of archaeal RNase P.</title>
        <authorList>
            <person name="Cho I.M."/>
            <person name="Lai L.B."/>
            <person name="Susanti D."/>
            <person name="Mukhopadhyay B."/>
            <person name="Gopalan V."/>
        </authorList>
    </citation>
    <scope>FUNCTION</scope>
    <scope>BIOPHYSICOCHEMICAL PROPERTIES</scope>
    <scope>SUBUNIT</scope>
    <scope>SUBCELLULAR LOCATION</scope>
    <source>
        <strain>DSM 14266 / JCM 13030 / NBRC 101832 / S2 / LL</strain>
    </source>
</reference>
<organism>
    <name type="scientific">Methanococcus maripaludis (strain DSM 14266 / JCM 13030 / NBRC 101832 / S2 / LL)</name>
    <dbReference type="NCBI Taxonomy" id="267377"/>
    <lineage>
        <taxon>Archaea</taxon>
        <taxon>Methanobacteriati</taxon>
        <taxon>Methanobacteriota</taxon>
        <taxon>Methanomada group</taxon>
        <taxon>Methanococci</taxon>
        <taxon>Methanococcales</taxon>
        <taxon>Methanococcaceae</taxon>
        <taxon>Methanococcus</taxon>
    </lineage>
</organism>
<keyword id="KW-0963">Cytoplasm</keyword>
<keyword id="KW-0255">Endonuclease</keyword>
<keyword id="KW-0378">Hydrolase</keyword>
<keyword id="KW-0540">Nuclease</keyword>
<keyword id="KW-1185">Reference proteome</keyword>
<keyword id="KW-0819">tRNA processing</keyword>
<accession>P60781</accession>
<gene>
    <name evidence="1" type="primary">rnp3</name>
    <name type="ordered locus">MMP0430</name>
</gene>
<comment type="function">
    <text evidence="1 2">Part of ribonuclease P, a protein complex that generates mature tRNA molecules by cleaving their 5'-ends.</text>
</comment>
<comment type="catalytic activity">
    <reaction evidence="1">
        <text>Endonucleolytic cleavage of RNA, removing 5'-extranucleotides from tRNA precursor.</text>
        <dbReference type="EC" id="3.1.26.5"/>
    </reaction>
</comment>
<comment type="biophysicochemical properties">
    <kinetics>
        <KM evidence="2">2.6 uM for pre-tRNA-Tyr in the absence of L7Ae</KM>
        <KM evidence="2">0.044 uM for pre-tRNA-Tyr in the presence of L7Ae</KM>
        <text>kcat 10 min(-1) in absence of L7Ae, 63 min(-1) in presence of L7Ae. Kinetic parameters determined at 37 degrees Celsius.</text>
    </kinetics>
    <temperatureDependence>
        <text evidence="2">Optimum temperature is 36-38 degrees Celsius in the absence of L7Ae, 48-50 degrees Celsius in presence of L7Ae.</text>
    </temperatureDependence>
</comment>
<comment type="subunit">
    <text evidence="2">Consists of a catalytic RNA component and at least 5 protein subunits.</text>
</comment>
<comment type="subcellular location">
    <subcellularLocation>
        <location evidence="1 2">Cytoplasm</location>
    </subcellularLocation>
</comment>
<comment type="similarity">
    <text evidence="1">Belongs to the eukaryotic/archaeal RNase P protein component 3 family.</text>
</comment>
<sequence>MLEGIFDINHVFDEEGIKTLKRFGWDGSVAVQNHNEYSEEKINTAVEYGENCEFKVYSGVKISTKNQNEMEKAVKKYRNKVDILLVEGGDVKINRRVLEMNDVDILSTPELNRMDNGLDHILARLGSTNRVAVELNFGNLLKSKNYDRSKILWAFQRNLKLSKKYDTPVVISSGANDIYGIKAPGDLRGFLNTVADPLYSKKIIETTSKIIDYRLYLKNKNVLMPGLEIVEE</sequence>
<protein>
    <recommendedName>
        <fullName evidence="1">Ribonuclease P protein component 3</fullName>
        <shortName evidence="1">RNase P component 3</shortName>
        <ecNumber evidence="1">3.1.26.5</ecNumber>
    </recommendedName>
    <alternativeName>
        <fullName evidence="1">Rpp30</fullName>
    </alternativeName>
</protein>
<dbReference type="EC" id="3.1.26.5" evidence="1"/>
<dbReference type="EMBL" id="BX950229">
    <property type="protein sequence ID" value="CAF29986.1"/>
    <property type="molecule type" value="Genomic_DNA"/>
</dbReference>
<dbReference type="RefSeq" id="WP_011170374.1">
    <property type="nucleotide sequence ID" value="NC_005791.1"/>
</dbReference>
<dbReference type="SMR" id="P60781"/>
<dbReference type="DIP" id="DIP-59366N"/>
<dbReference type="IntAct" id="P60781">
    <property type="interactions" value="2"/>
</dbReference>
<dbReference type="STRING" id="267377.MMP0430"/>
<dbReference type="DNASU" id="2762077"/>
<dbReference type="EnsemblBacteria" id="CAF29986">
    <property type="protein sequence ID" value="CAF29986"/>
    <property type="gene ID" value="MMP0430"/>
</dbReference>
<dbReference type="GeneID" id="2762077"/>
<dbReference type="KEGG" id="mmp:MMP0430"/>
<dbReference type="PATRIC" id="fig|267377.15.peg.434"/>
<dbReference type="eggNOG" id="arCOG00307">
    <property type="taxonomic scope" value="Archaea"/>
</dbReference>
<dbReference type="HOGENOM" id="CLU_074509_0_0_2"/>
<dbReference type="OrthoDB" id="85765at2157"/>
<dbReference type="BRENDA" id="3.1.26.5">
    <property type="organism ID" value="3262"/>
</dbReference>
<dbReference type="Proteomes" id="UP000000590">
    <property type="component" value="Chromosome"/>
</dbReference>
<dbReference type="GO" id="GO:0005737">
    <property type="term" value="C:cytoplasm"/>
    <property type="evidence" value="ECO:0000314"/>
    <property type="project" value="UniProtKB"/>
</dbReference>
<dbReference type="GO" id="GO:0030677">
    <property type="term" value="C:ribonuclease P complex"/>
    <property type="evidence" value="ECO:0000314"/>
    <property type="project" value="UniProtKB"/>
</dbReference>
<dbReference type="GO" id="GO:0004526">
    <property type="term" value="F:ribonuclease P activity"/>
    <property type="evidence" value="ECO:0000314"/>
    <property type="project" value="UniProtKB"/>
</dbReference>
<dbReference type="GO" id="GO:0001682">
    <property type="term" value="P:tRNA 5'-leader removal"/>
    <property type="evidence" value="ECO:0000314"/>
    <property type="project" value="UniProtKB"/>
</dbReference>
<dbReference type="FunFam" id="3.20.20.140:FF:000196">
    <property type="entry name" value="Ribonuclease P protein component 3"/>
    <property type="match status" value="1"/>
</dbReference>
<dbReference type="Gene3D" id="3.20.20.140">
    <property type="entry name" value="Metal-dependent hydrolases"/>
    <property type="match status" value="1"/>
</dbReference>
<dbReference type="HAMAP" id="MF_00756">
    <property type="entry name" value="RNase_P_3"/>
    <property type="match status" value="1"/>
</dbReference>
<dbReference type="InterPro" id="IPR016195">
    <property type="entry name" value="Pol/histidinol_Pase-like"/>
</dbReference>
<dbReference type="InterPro" id="IPR023539">
    <property type="entry name" value="RNase_P_comp-3_arc"/>
</dbReference>
<dbReference type="InterPro" id="IPR002738">
    <property type="entry name" value="RNase_P_p30"/>
</dbReference>
<dbReference type="NCBIfam" id="NF046108">
    <property type="entry name" value="RNaseP3Mthcoc"/>
    <property type="match status" value="1"/>
</dbReference>
<dbReference type="Pfam" id="PF01876">
    <property type="entry name" value="RNase_P_p30"/>
    <property type="match status" value="1"/>
</dbReference>
<dbReference type="SUPFAM" id="SSF89550">
    <property type="entry name" value="PHP domain-like"/>
    <property type="match status" value="1"/>
</dbReference>